<accession>Q7VW06</accession>
<keyword id="KW-0143">Chaperone</keyword>
<keyword id="KW-0574">Periplasm</keyword>
<keyword id="KW-0653">Protein transport</keyword>
<keyword id="KW-1185">Reference proteome</keyword>
<keyword id="KW-0732">Signal</keyword>
<keyword id="KW-0813">Transport</keyword>
<protein>
    <recommendedName>
        <fullName evidence="1">Outer-membrane lipoprotein carrier protein</fullName>
    </recommendedName>
</protein>
<dbReference type="EMBL" id="BX640418">
    <property type="protein sequence ID" value="CAE42744.1"/>
    <property type="molecule type" value="Genomic_DNA"/>
</dbReference>
<dbReference type="RefSeq" id="NP_881099.1">
    <property type="nucleotide sequence ID" value="NC_002929.2"/>
</dbReference>
<dbReference type="RefSeq" id="WP_010930946.1">
    <property type="nucleotide sequence ID" value="NZ_CP039022.1"/>
</dbReference>
<dbReference type="SMR" id="Q7VW06"/>
<dbReference type="STRING" id="257313.BP2472"/>
<dbReference type="PaxDb" id="257313-BP2472"/>
<dbReference type="GeneID" id="69602371"/>
<dbReference type="KEGG" id="bpe:BP2472"/>
<dbReference type="PATRIC" id="fig|257313.5.peg.2665"/>
<dbReference type="eggNOG" id="COG2834">
    <property type="taxonomic scope" value="Bacteria"/>
</dbReference>
<dbReference type="HOGENOM" id="CLU_087560_0_1_4"/>
<dbReference type="Proteomes" id="UP000002676">
    <property type="component" value="Chromosome"/>
</dbReference>
<dbReference type="GO" id="GO:0030288">
    <property type="term" value="C:outer membrane-bounded periplasmic space"/>
    <property type="evidence" value="ECO:0007669"/>
    <property type="project" value="TreeGrafter"/>
</dbReference>
<dbReference type="GO" id="GO:0044874">
    <property type="term" value="P:lipoprotein localization to outer membrane"/>
    <property type="evidence" value="ECO:0007669"/>
    <property type="project" value="UniProtKB-UniRule"/>
</dbReference>
<dbReference type="GO" id="GO:0042953">
    <property type="term" value="P:lipoprotein transport"/>
    <property type="evidence" value="ECO:0007669"/>
    <property type="project" value="InterPro"/>
</dbReference>
<dbReference type="CDD" id="cd16325">
    <property type="entry name" value="LolA"/>
    <property type="match status" value="1"/>
</dbReference>
<dbReference type="Gene3D" id="2.50.20.10">
    <property type="entry name" value="Lipoprotein localisation LolA/LolB/LppX"/>
    <property type="match status" value="1"/>
</dbReference>
<dbReference type="HAMAP" id="MF_00240">
    <property type="entry name" value="LolA"/>
    <property type="match status" value="1"/>
</dbReference>
<dbReference type="InterPro" id="IPR029046">
    <property type="entry name" value="LolA/LolB/LppX"/>
</dbReference>
<dbReference type="InterPro" id="IPR004564">
    <property type="entry name" value="OM_lipoprot_carrier_LolA-like"/>
</dbReference>
<dbReference type="InterPro" id="IPR018323">
    <property type="entry name" value="OM_lipoprot_carrier_LolA_Pbac"/>
</dbReference>
<dbReference type="NCBIfam" id="TIGR00547">
    <property type="entry name" value="lolA"/>
    <property type="match status" value="1"/>
</dbReference>
<dbReference type="NCBIfam" id="NF000661">
    <property type="entry name" value="PRK00031.1-3"/>
    <property type="match status" value="1"/>
</dbReference>
<dbReference type="PANTHER" id="PTHR35869">
    <property type="entry name" value="OUTER-MEMBRANE LIPOPROTEIN CARRIER PROTEIN"/>
    <property type="match status" value="1"/>
</dbReference>
<dbReference type="PANTHER" id="PTHR35869:SF1">
    <property type="entry name" value="OUTER-MEMBRANE LIPOPROTEIN CARRIER PROTEIN"/>
    <property type="match status" value="1"/>
</dbReference>
<dbReference type="Pfam" id="PF03548">
    <property type="entry name" value="LolA"/>
    <property type="match status" value="1"/>
</dbReference>
<dbReference type="SUPFAM" id="SSF89392">
    <property type="entry name" value="Prokaryotic lipoproteins and lipoprotein localization factors"/>
    <property type="match status" value="1"/>
</dbReference>
<sequence length="210" mass="22298">MHMIRRAAGALAVFAVAALAAAPAWAATAQEQLDTFVATVKGATGSFKQSTVSPQGATQPAQSGTFAFQRPGKFKWAVQLPYEQLIVSDGKQVFQYDPDLAQVTVRQVDQAIGTSPAAILFGAGQLSQAFAVSALPDRDGLQWLRAKPRNADAGFSQVDIGLRDNQPARIELVDAFGQTTRVELSNLLPGAVPASEFQFTPPQGVDVVKM</sequence>
<name>LOLA_BORPE</name>
<comment type="function">
    <text evidence="1">Participates in the translocation of lipoproteins from the inner membrane to the outer membrane. Only forms a complex with a lipoprotein if the residue after the N-terminal Cys is not an aspartate (The Asp acts as a targeting signal to indicate that the lipoprotein should stay in the inner membrane).</text>
</comment>
<comment type="subunit">
    <text evidence="1">Monomer.</text>
</comment>
<comment type="subcellular location">
    <subcellularLocation>
        <location evidence="1">Periplasm</location>
    </subcellularLocation>
</comment>
<comment type="similarity">
    <text evidence="1">Belongs to the LolA family.</text>
</comment>
<organism>
    <name type="scientific">Bordetella pertussis (strain Tohama I / ATCC BAA-589 / NCTC 13251)</name>
    <dbReference type="NCBI Taxonomy" id="257313"/>
    <lineage>
        <taxon>Bacteria</taxon>
        <taxon>Pseudomonadati</taxon>
        <taxon>Pseudomonadota</taxon>
        <taxon>Betaproteobacteria</taxon>
        <taxon>Burkholderiales</taxon>
        <taxon>Alcaligenaceae</taxon>
        <taxon>Bordetella</taxon>
    </lineage>
</organism>
<proteinExistence type="inferred from homology"/>
<feature type="signal peptide" evidence="1">
    <location>
        <begin position="1"/>
        <end position="26"/>
    </location>
</feature>
<feature type="chain" id="PRO_0000018251" description="Outer-membrane lipoprotein carrier protein">
    <location>
        <begin position="27"/>
        <end position="210"/>
    </location>
</feature>
<gene>
    <name evidence="1" type="primary">lolA</name>
    <name type="ordered locus">BP2472</name>
</gene>
<evidence type="ECO:0000255" key="1">
    <source>
        <dbReference type="HAMAP-Rule" id="MF_00240"/>
    </source>
</evidence>
<reference key="1">
    <citation type="journal article" date="2003" name="Nat. Genet.">
        <title>Comparative analysis of the genome sequences of Bordetella pertussis, Bordetella parapertussis and Bordetella bronchiseptica.</title>
        <authorList>
            <person name="Parkhill J."/>
            <person name="Sebaihia M."/>
            <person name="Preston A."/>
            <person name="Murphy L.D."/>
            <person name="Thomson N.R."/>
            <person name="Harris D.E."/>
            <person name="Holden M.T.G."/>
            <person name="Churcher C.M."/>
            <person name="Bentley S.D."/>
            <person name="Mungall K.L."/>
            <person name="Cerdeno-Tarraga A.-M."/>
            <person name="Temple L."/>
            <person name="James K.D."/>
            <person name="Harris B."/>
            <person name="Quail M.A."/>
            <person name="Achtman M."/>
            <person name="Atkin R."/>
            <person name="Baker S."/>
            <person name="Basham D."/>
            <person name="Bason N."/>
            <person name="Cherevach I."/>
            <person name="Chillingworth T."/>
            <person name="Collins M."/>
            <person name="Cronin A."/>
            <person name="Davis P."/>
            <person name="Doggett J."/>
            <person name="Feltwell T."/>
            <person name="Goble A."/>
            <person name="Hamlin N."/>
            <person name="Hauser H."/>
            <person name="Holroyd S."/>
            <person name="Jagels K."/>
            <person name="Leather S."/>
            <person name="Moule S."/>
            <person name="Norberczak H."/>
            <person name="O'Neil S."/>
            <person name="Ormond D."/>
            <person name="Price C."/>
            <person name="Rabbinowitsch E."/>
            <person name="Rutter S."/>
            <person name="Sanders M."/>
            <person name="Saunders D."/>
            <person name="Seeger K."/>
            <person name="Sharp S."/>
            <person name="Simmonds M."/>
            <person name="Skelton J."/>
            <person name="Squares R."/>
            <person name="Squares S."/>
            <person name="Stevens K."/>
            <person name="Unwin L."/>
            <person name="Whitehead S."/>
            <person name="Barrell B.G."/>
            <person name="Maskell D.J."/>
        </authorList>
    </citation>
    <scope>NUCLEOTIDE SEQUENCE [LARGE SCALE GENOMIC DNA]</scope>
    <source>
        <strain>Tohama I / ATCC BAA-589 / NCTC 13251</strain>
    </source>
</reference>